<accession>Q91483</accession>
<name>PRVB2_SALSA</name>
<protein>
    <recommendedName>
        <fullName>Parvalbumin beta 2</fullName>
    </recommendedName>
    <alternativeName>
        <fullName>Major allergen Sal s 1</fullName>
    </alternativeName>
    <allergenName>Sal s 1</allergenName>
</protein>
<keyword id="KW-0007">Acetylation</keyword>
<keyword id="KW-0020">Allergen</keyword>
<keyword id="KW-0106">Calcium</keyword>
<keyword id="KW-0479">Metal-binding</keyword>
<keyword id="KW-0514">Muscle protein</keyword>
<keyword id="KW-1185">Reference proteome</keyword>
<keyword id="KW-0677">Repeat</keyword>
<comment type="function">
    <text evidence="1">In muscle, parvalbumin is thought to be involved in relaxation after contraction. It binds two calcium ions (By similarity).</text>
</comment>
<comment type="allergen">
    <text>Causes an allergic reaction in human.</text>
</comment>
<comment type="similarity">
    <text evidence="4">Belongs to the parvalbumin family.</text>
</comment>
<proteinExistence type="evidence at protein level"/>
<reference key="1">
    <citation type="journal article" date="1996" name="Scand. J. Immunol.">
        <title>Cloning of two distinct cDNAs encoding parvalbumin, the major allergen of Atlantic salmon (Salmo salar).</title>
        <authorList>
            <person name="Lindstroem C.D.-V."/>
            <person name="van Do T."/>
            <person name="Hordvik I."/>
            <person name="Endresen C."/>
            <person name="Elsayed S."/>
        </authorList>
    </citation>
    <scope>NUCLEOTIDE SEQUENCE [MRNA]</scope>
    <source>
        <tissue>Muscle</tissue>
    </source>
</reference>
<reference key="2">
    <citation type="submission" date="1999-07" db="EMBL/GenBank/DDBJ databases">
        <authorList>
            <person name="van Do T."/>
        </authorList>
    </citation>
    <scope>SEQUENCE REVISION</scope>
</reference>
<evidence type="ECO:0000250" key="1"/>
<evidence type="ECO:0000250" key="2">
    <source>
        <dbReference type="UniProtKB" id="P02621"/>
    </source>
</evidence>
<evidence type="ECO:0000255" key="3">
    <source>
        <dbReference type="PROSITE-ProRule" id="PRU00448"/>
    </source>
</evidence>
<evidence type="ECO:0000305" key="4"/>
<organism>
    <name type="scientific">Salmo salar</name>
    <name type="common">Atlantic salmon</name>
    <dbReference type="NCBI Taxonomy" id="8030"/>
    <lineage>
        <taxon>Eukaryota</taxon>
        <taxon>Metazoa</taxon>
        <taxon>Chordata</taxon>
        <taxon>Craniata</taxon>
        <taxon>Vertebrata</taxon>
        <taxon>Euteleostomi</taxon>
        <taxon>Actinopterygii</taxon>
        <taxon>Neopterygii</taxon>
        <taxon>Teleostei</taxon>
        <taxon>Protacanthopterygii</taxon>
        <taxon>Salmoniformes</taxon>
        <taxon>Salmonidae</taxon>
        <taxon>Salmoninae</taxon>
        <taxon>Salmo</taxon>
    </lineage>
</organism>
<sequence length="108" mass="11383">MSFAGLNDADVAAALAACTAADSFNHKAFFAKVGLASKSSDDVKKAFYVIDQDKSGFIEEDELKLFLQNFSASARALTDAETKAFLADGDKDGDGMIGVDEFAAMIKG</sequence>
<feature type="initiator methionine" description="Removed" evidence="1">
    <location>
        <position position="1"/>
    </location>
</feature>
<feature type="chain" id="PRO_0000073620" description="Parvalbumin beta 2">
    <location>
        <begin position="2"/>
        <end position="108"/>
    </location>
</feature>
<feature type="domain" description="EF-hand 1" evidence="3">
    <location>
        <begin position="38"/>
        <end position="73"/>
    </location>
</feature>
<feature type="domain" description="EF-hand 2" evidence="3">
    <location>
        <begin position="77"/>
        <end position="108"/>
    </location>
</feature>
<feature type="binding site" evidence="2 3">
    <location>
        <position position="51"/>
    </location>
    <ligand>
        <name>Ca(2+)</name>
        <dbReference type="ChEBI" id="CHEBI:29108"/>
        <label>1</label>
    </ligand>
</feature>
<feature type="binding site" evidence="2 3">
    <location>
        <position position="53"/>
    </location>
    <ligand>
        <name>Ca(2+)</name>
        <dbReference type="ChEBI" id="CHEBI:29108"/>
        <label>1</label>
    </ligand>
</feature>
<feature type="binding site" evidence="2 3">
    <location>
        <position position="55"/>
    </location>
    <ligand>
        <name>Ca(2+)</name>
        <dbReference type="ChEBI" id="CHEBI:29108"/>
        <label>1</label>
    </ligand>
</feature>
<feature type="binding site" evidence="2">
    <location>
        <position position="57"/>
    </location>
    <ligand>
        <name>Ca(2+)</name>
        <dbReference type="ChEBI" id="CHEBI:29108"/>
        <label>1</label>
    </ligand>
</feature>
<feature type="binding site" evidence="2">
    <location>
        <position position="59"/>
    </location>
    <ligand>
        <name>Ca(2+)</name>
        <dbReference type="ChEBI" id="CHEBI:29108"/>
        <label>1</label>
    </ligand>
</feature>
<feature type="binding site" evidence="2 3">
    <location>
        <position position="62"/>
    </location>
    <ligand>
        <name>Ca(2+)</name>
        <dbReference type="ChEBI" id="CHEBI:29108"/>
        <label>1</label>
    </ligand>
</feature>
<feature type="binding site" evidence="2 3">
    <location>
        <position position="90"/>
    </location>
    <ligand>
        <name>Ca(2+)</name>
        <dbReference type="ChEBI" id="CHEBI:29108"/>
        <label>2</label>
    </ligand>
</feature>
<feature type="binding site" evidence="2 3">
    <location>
        <position position="92"/>
    </location>
    <ligand>
        <name>Ca(2+)</name>
        <dbReference type="ChEBI" id="CHEBI:29108"/>
        <label>2</label>
    </ligand>
</feature>
<feature type="binding site" evidence="2 3">
    <location>
        <position position="94"/>
    </location>
    <ligand>
        <name>Ca(2+)</name>
        <dbReference type="ChEBI" id="CHEBI:29108"/>
        <label>2</label>
    </ligand>
</feature>
<feature type="binding site" evidence="3">
    <location>
        <position position="96"/>
    </location>
    <ligand>
        <name>Ca(2+)</name>
        <dbReference type="ChEBI" id="CHEBI:29108"/>
        <label>2</label>
    </ligand>
</feature>
<feature type="binding site" evidence="2 3">
    <location>
        <position position="101"/>
    </location>
    <ligand>
        <name>Ca(2+)</name>
        <dbReference type="ChEBI" id="CHEBI:29108"/>
        <label>2</label>
    </ligand>
</feature>
<feature type="modified residue" description="N-acetylserine" evidence="1">
    <location>
        <position position="2"/>
    </location>
</feature>
<dbReference type="EMBL" id="X97825">
    <property type="protein sequence ID" value="CAA66404.2"/>
    <property type="molecule type" value="mRNA"/>
</dbReference>
<dbReference type="RefSeq" id="NP_001117189.1">
    <property type="nucleotide sequence ID" value="NM_001123717.1"/>
</dbReference>
<dbReference type="SMR" id="Q91483"/>
<dbReference type="STRING" id="8030.ENSSSAP00000001067"/>
<dbReference type="Allergome" id="6117">
    <property type="allergen name" value="Sal s 1.0201"/>
</dbReference>
<dbReference type="Allergome" id="619">
    <property type="allergen name" value="Sal s 1"/>
</dbReference>
<dbReference type="PaxDb" id="8030-ENSSSAP00000001067"/>
<dbReference type="Ensembl" id="ENSSSAT00020192446">
    <property type="protein sequence ID" value="ENSSSAP00020145411"/>
    <property type="gene ID" value="ENSSSAG00020080786"/>
</dbReference>
<dbReference type="Ensembl" id="ENSSSAT00070017452">
    <property type="protein sequence ID" value="ENSSSAP00070016549"/>
    <property type="gene ID" value="ENSSSAG00070011083"/>
</dbReference>
<dbReference type="Ensembl" id="ENSSSAT00070068166">
    <property type="protein sequence ID" value="ENSSSAP00070065324"/>
    <property type="gene ID" value="ENSSSAG00070042399"/>
</dbReference>
<dbReference type="Ensembl" id="ENSSSAT00075093333">
    <property type="protein sequence ID" value="ENSSSAP00075067828"/>
    <property type="gene ID" value="ENSSSAG00075044500"/>
</dbReference>
<dbReference type="GeneID" id="100137050"/>
<dbReference type="KEGG" id="sasa:100137050"/>
<dbReference type="CTD" id="100137050"/>
<dbReference type="OrthoDB" id="536284at7898"/>
<dbReference type="Proteomes" id="UP000087266">
    <property type="component" value="Chromosome ssa28"/>
</dbReference>
<dbReference type="Bgee" id="ENSSSAG00000056178">
    <property type="expression patterns" value="Expressed in camera-type eye and 18 other cell types or tissues"/>
</dbReference>
<dbReference type="GO" id="GO:0030424">
    <property type="term" value="C:axon"/>
    <property type="evidence" value="ECO:0000250"/>
    <property type="project" value="AgBase"/>
</dbReference>
<dbReference type="GO" id="GO:0043679">
    <property type="term" value="C:axon terminus"/>
    <property type="evidence" value="ECO:0000250"/>
    <property type="project" value="AgBase"/>
</dbReference>
<dbReference type="GO" id="GO:0005737">
    <property type="term" value="C:cytoplasm"/>
    <property type="evidence" value="ECO:0007669"/>
    <property type="project" value="TreeGrafter"/>
</dbReference>
<dbReference type="GO" id="GO:0030425">
    <property type="term" value="C:dendrite"/>
    <property type="evidence" value="ECO:0000250"/>
    <property type="project" value="AgBase"/>
</dbReference>
<dbReference type="GO" id="GO:0005509">
    <property type="term" value="F:calcium ion binding"/>
    <property type="evidence" value="ECO:0007669"/>
    <property type="project" value="InterPro"/>
</dbReference>
<dbReference type="FunFam" id="1.10.238.10:FF:000060">
    <property type="entry name" value="Parvalbumin, thymic"/>
    <property type="match status" value="1"/>
</dbReference>
<dbReference type="Gene3D" id="1.10.238.10">
    <property type="entry name" value="EF-hand"/>
    <property type="match status" value="1"/>
</dbReference>
<dbReference type="InterPro" id="IPR011992">
    <property type="entry name" value="EF-hand-dom_pair"/>
</dbReference>
<dbReference type="InterPro" id="IPR018247">
    <property type="entry name" value="EF_Hand_1_Ca_BS"/>
</dbReference>
<dbReference type="InterPro" id="IPR002048">
    <property type="entry name" value="EF_hand_dom"/>
</dbReference>
<dbReference type="InterPro" id="IPR008080">
    <property type="entry name" value="Parvalbumin"/>
</dbReference>
<dbReference type="PANTHER" id="PTHR11653:SF12">
    <property type="entry name" value="PARVALBUMIN"/>
    <property type="match status" value="1"/>
</dbReference>
<dbReference type="PANTHER" id="PTHR11653">
    <property type="entry name" value="PARVALBUMIN ALPHA"/>
    <property type="match status" value="1"/>
</dbReference>
<dbReference type="Pfam" id="PF13499">
    <property type="entry name" value="EF-hand_7"/>
    <property type="match status" value="1"/>
</dbReference>
<dbReference type="PRINTS" id="PR01697">
    <property type="entry name" value="PARVALBUMIN"/>
</dbReference>
<dbReference type="SMART" id="SM00054">
    <property type="entry name" value="EFh"/>
    <property type="match status" value="2"/>
</dbReference>
<dbReference type="SUPFAM" id="SSF47473">
    <property type="entry name" value="EF-hand"/>
    <property type="match status" value="1"/>
</dbReference>
<dbReference type="PROSITE" id="PS00018">
    <property type="entry name" value="EF_HAND_1"/>
    <property type="match status" value="2"/>
</dbReference>
<dbReference type="PROSITE" id="PS50222">
    <property type="entry name" value="EF_HAND_2"/>
    <property type="match status" value="2"/>
</dbReference>